<comment type="function">
    <text evidence="1">Binds as a heterodimer with protein bS6 to the central domain of the 16S rRNA, where it helps stabilize the platform of the 30S subunit.</text>
</comment>
<comment type="subunit">
    <text evidence="1">Part of the 30S ribosomal subunit. Forms a tight heterodimer with protein bS6.</text>
</comment>
<comment type="similarity">
    <text evidence="1">Belongs to the bacterial ribosomal protein bS18 family.</text>
</comment>
<feature type="chain" id="PRO_0000345535" description="Small ribosomal subunit protein bS18B">
    <location>
        <begin position="1"/>
        <end position="88"/>
    </location>
</feature>
<name>RS182_ROSCS</name>
<gene>
    <name evidence="1" type="primary">rpsR2</name>
    <name type="ordered locus">Rcas_3903</name>
</gene>
<accession>A7NQU3</accession>
<proteinExistence type="inferred from homology"/>
<keyword id="KW-1185">Reference proteome</keyword>
<keyword id="KW-0687">Ribonucleoprotein</keyword>
<keyword id="KW-0689">Ribosomal protein</keyword>
<keyword id="KW-0694">RNA-binding</keyword>
<keyword id="KW-0699">rRNA-binding</keyword>
<evidence type="ECO:0000255" key="1">
    <source>
        <dbReference type="HAMAP-Rule" id="MF_00270"/>
    </source>
</evidence>
<evidence type="ECO:0000305" key="2"/>
<organism>
    <name type="scientific">Roseiflexus castenholzii (strain DSM 13941 / HLO8)</name>
    <dbReference type="NCBI Taxonomy" id="383372"/>
    <lineage>
        <taxon>Bacteria</taxon>
        <taxon>Bacillati</taxon>
        <taxon>Chloroflexota</taxon>
        <taxon>Chloroflexia</taxon>
        <taxon>Chloroflexales</taxon>
        <taxon>Roseiflexineae</taxon>
        <taxon>Roseiflexaceae</taxon>
        <taxon>Roseiflexus</taxon>
    </lineage>
</organism>
<sequence length="88" mass="10376">MTFRNGGRLMRGRGGRRKVCEFSRLGILPDYKDPERLRRFLGPTGKILPRRRTGLTAKMQRRLTIAIKRARHMALLPFVERSVTDRRR</sequence>
<dbReference type="EMBL" id="CP000804">
    <property type="protein sequence ID" value="ABU59939.1"/>
    <property type="molecule type" value="Genomic_DNA"/>
</dbReference>
<dbReference type="RefSeq" id="WP_012122362.1">
    <property type="nucleotide sequence ID" value="NC_009767.1"/>
</dbReference>
<dbReference type="SMR" id="A7NQU3"/>
<dbReference type="STRING" id="383372.Rcas_3903"/>
<dbReference type="KEGG" id="rca:Rcas_3903"/>
<dbReference type="eggNOG" id="COG0238">
    <property type="taxonomic scope" value="Bacteria"/>
</dbReference>
<dbReference type="HOGENOM" id="CLU_148710_2_2_0"/>
<dbReference type="OrthoDB" id="9812008at2"/>
<dbReference type="Proteomes" id="UP000000263">
    <property type="component" value="Chromosome"/>
</dbReference>
<dbReference type="GO" id="GO:0022627">
    <property type="term" value="C:cytosolic small ribosomal subunit"/>
    <property type="evidence" value="ECO:0007669"/>
    <property type="project" value="TreeGrafter"/>
</dbReference>
<dbReference type="GO" id="GO:0070181">
    <property type="term" value="F:small ribosomal subunit rRNA binding"/>
    <property type="evidence" value="ECO:0007669"/>
    <property type="project" value="TreeGrafter"/>
</dbReference>
<dbReference type="GO" id="GO:0003735">
    <property type="term" value="F:structural constituent of ribosome"/>
    <property type="evidence" value="ECO:0007669"/>
    <property type="project" value="InterPro"/>
</dbReference>
<dbReference type="GO" id="GO:0006412">
    <property type="term" value="P:translation"/>
    <property type="evidence" value="ECO:0007669"/>
    <property type="project" value="UniProtKB-UniRule"/>
</dbReference>
<dbReference type="Gene3D" id="4.10.640.10">
    <property type="entry name" value="Ribosomal protein S18"/>
    <property type="match status" value="1"/>
</dbReference>
<dbReference type="HAMAP" id="MF_00270">
    <property type="entry name" value="Ribosomal_bS18"/>
    <property type="match status" value="1"/>
</dbReference>
<dbReference type="InterPro" id="IPR001648">
    <property type="entry name" value="Ribosomal_bS18"/>
</dbReference>
<dbReference type="InterPro" id="IPR018275">
    <property type="entry name" value="Ribosomal_bS18_CS"/>
</dbReference>
<dbReference type="InterPro" id="IPR036870">
    <property type="entry name" value="Ribosomal_bS18_sf"/>
</dbReference>
<dbReference type="NCBIfam" id="TIGR00165">
    <property type="entry name" value="S18"/>
    <property type="match status" value="1"/>
</dbReference>
<dbReference type="PANTHER" id="PTHR13479">
    <property type="entry name" value="30S RIBOSOMAL PROTEIN S18"/>
    <property type="match status" value="1"/>
</dbReference>
<dbReference type="PANTHER" id="PTHR13479:SF40">
    <property type="entry name" value="SMALL RIBOSOMAL SUBUNIT PROTEIN BS18M"/>
    <property type="match status" value="1"/>
</dbReference>
<dbReference type="Pfam" id="PF01084">
    <property type="entry name" value="Ribosomal_S18"/>
    <property type="match status" value="1"/>
</dbReference>
<dbReference type="PRINTS" id="PR00974">
    <property type="entry name" value="RIBOSOMALS18"/>
</dbReference>
<dbReference type="SUPFAM" id="SSF46911">
    <property type="entry name" value="Ribosomal protein S18"/>
    <property type="match status" value="1"/>
</dbReference>
<dbReference type="PROSITE" id="PS00057">
    <property type="entry name" value="RIBOSOMAL_S18"/>
    <property type="match status" value="1"/>
</dbReference>
<protein>
    <recommendedName>
        <fullName evidence="1">Small ribosomal subunit protein bS18B</fullName>
    </recommendedName>
    <alternativeName>
        <fullName evidence="2">30S ribosomal protein S18 2</fullName>
    </alternativeName>
</protein>
<reference key="1">
    <citation type="submission" date="2007-08" db="EMBL/GenBank/DDBJ databases">
        <title>Complete sequence of Roseiflexus castenholzii DSM 13941.</title>
        <authorList>
            <consortium name="US DOE Joint Genome Institute"/>
            <person name="Copeland A."/>
            <person name="Lucas S."/>
            <person name="Lapidus A."/>
            <person name="Barry K."/>
            <person name="Glavina del Rio T."/>
            <person name="Dalin E."/>
            <person name="Tice H."/>
            <person name="Pitluck S."/>
            <person name="Thompson L.S."/>
            <person name="Brettin T."/>
            <person name="Bruce D."/>
            <person name="Detter J.C."/>
            <person name="Han C."/>
            <person name="Tapia R."/>
            <person name="Schmutz J."/>
            <person name="Larimer F."/>
            <person name="Land M."/>
            <person name="Hauser L."/>
            <person name="Kyrpides N."/>
            <person name="Mikhailova N."/>
            <person name="Bryant D.A."/>
            <person name="Hanada S."/>
            <person name="Tsukatani Y."/>
            <person name="Richardson P."/>
        </authorList>
    </citation>
    <scope>NUCLEOTIDE SEQUENCE [LARGE SCALE GENOMIC DNA]</scope>
    <source>
        <strain>DSM 13941 / HLO8</strain>
    </source>
</reference>